<feature type="chain" id="PRO_0000152479" description="Lecithin retinol acyltransferase">
    <location>
        <begin position="1"/>
        <end position="231"/>
    </location>
</feature>
<feature type="topological domain" description="Cytoplasmic" evidence="6">
    <location>
        <begin position="1"/>
        <end position="194"/>
    </location>
</feature>
<feature type="transmembrane region" description="Helical" evidence="3">
    <location>
        <begin position="195"/>
        <end position="215"/>
    </location>
</feature>
<feature type="topological domain" description="Lumenal" evidence="6">
    <location>
        <begin position="216"/>
        <end position="231"/>
    </location>
</feature>
<feature type="domain" description="LRAT" evidence="4">
    <location>
        <begin position="50"/>
        <end position="177"/>
    </location>
</feature>
<feature type="active site" evidence="4">
    <location>
        <position position="60"/>
    </location>
</feature>
<feature type="active site" evidence="4">
    <location>
        <position position="72"/>
    </location>
</feature>
<feature type="active site" description="Acyl-thioester intermediate" evidence="4 8">
    <location>
        <position position="161"/>
    </location>
</feature>
<feature type="mutagenesis site" description="Increases degradation via the proteasomal pathway. No effect on endoplasmic reticulum location. Impairs vitamin A uptake. No effect on retinol acyltransferase activity." evidence="10">
    <original>E</original>
    <variation>L</variation>
    <location>
        <position position="14"/>
    </location>
</feature>
<feature type="strand" evidence="14">
    <location>
        <begin position="76"/>
        <end position="83"/>
    </location>
</feature>
<feature type="helix" evidence="14">
    <location>
        <begin position="88"/>
        <end position="90"/>
    </location>
</feature>
<feature type="strand" evidence="14">
    <location>
        <begin position="98"/>
        <end position="106"/>
    </location>
</feature>
<name>LRAT_MOUSE</name>
<reference key="1">
    <citation type="journal article" date="2000" name="J. Lipid Res.">
        <title>Lecithin:retinol acyltransferase from mouse and rat liver. cDNA cloning and liver-specific regulation by dietary vitamin A and retinoic acid.</title>
        <authorList>
            <person name="Zolfaghari R."/>
            <person name="Ross A.C."/>
        </authorList>
    </citation>
    <scope>NUCLEOTIDE SEQUENCE [MRNA]</scope>
    <scope>INDUCTION BY RETINOIC ACID</scope>
    <source>
        <strain>BALB/cJ</strain>
        <tissue>Liver</tissue>
    </source>
</reference>
<reference key="2">
    <citation type="journal article" date="2005" name="Science">
        <title>The transcriptional landscape of the mammalian genome.</title>
        <authorList>
            <person name="Carninci P."/>
            <person name="Kasukawa T."/>
            <person name="Katayama S."/>
            <person name="Gough J."/>
            <person name="Frith M.C."/>
            <person name="Maeda N."/>
            <person name="Oyama R."/>
            <person name="Ravasi T."/>
            <person name="Lenhard B."/>
            <person name="Wells C."/>
            <person name="Kodzius R."/>
            <person name="Shimokawa K."/>
            <person name="Bajic V.B."/>
            <person name="Brenner S.E."/>
            <person name="Batalov S."/>
            <person name="Forrest A.R."/>
            <person name="Zavolan M."/>
            <person name="Davis M.J."/>
            <person name="Wilming L.G."/>
            <person name="Aidinis V."/>
            <person name="Allen J.E."/>
            <person name="Ambesi-Impiombato A."/>
            <person name="Apweiler R."/>
            <person name="Aturaliya R.N."/>
            <person name="Bailey T.L."/>
            <person name="Bansal M."/>
            <person name="Baxter L."/>
            <person name="Beisel K.W."/>
            <person name="Bersano T."/>
            <person name="Bono H."/>
            <person name="Chalk A.M."/>
            <person name="Chiu K.P."/>
            <person name="Choudhary V."/>
            <person name="Christoffels A."/>
            <person name="Clutterbuck D.R."/>
            <person name="Crowe M.L."/>
            <person name="Dalla E."/>
            <person name="Dalrymple B.P."/>
            <person name="de Bono B."/>
            <person name="Della Gatta G."/>
            <person name="di Bernardo D."/>
            <person name="Down T."/>
            <person name="Engstrom P."/>
            <person name="Fagiolini M."/>
            <person name="Faulkner G."/>
            <person name="Fletcher C.F."/>
            <person name="Fukushima T."/>
            <person name="Furuno M."/>
            <person name="Futaki S."/>
            <person name="Gariboldi M."/>
            <person name="Georgii-Hemming P."/>
            <person name="Gingeras T.R."/>
            <person name="Gojobori T."/>
            <person name="Green R.E."/>
            <person name="Gustincich S."/>
            <person name="Harbers M."/>
            <person name="Hayashi Y."/>
            <person name="Hensch T.K."/>
            <person name="Hirokawa N."/>
            <person name="Hill D."/>
            <person name="Huminiecki L."/>
            <person name="Iacono M."/>
            <person name="Ikeo K."/>
            <person name="Iwama A."/>
            <person name="Ishikawa T."/>
            <person name="Jakt M."/>
            <person name="Kanapin A."/>
            <person name="Katoh M."/>
            <person name="Kawasawa Y."/>
            <person name="Kelso J."/>
            <person name="Kitamura H."/>
            <person name="Kitano H."/>
            <person name="Kollias G."/>
            <person name="Krishnan S.P."/>
            <person name="Kruger A."/>
            <person name="Kummerfeld S.K."/>
            <person name="Kurochkin I.V."/>
            <person name="Lareau L.F."/>
            <person name="Lazarevic D."/>
            <person name="Lipovich L."/>
            <person name="Liu J."/>
            <person name="Liuni S."/>
            <person name="McWilliam S."/>
            <person name="Madan Babu M."/>
            <person name="Madera M."/>
            <person name="Marchionni L."/>
            <person name="Matsuda H."/>
            <person name="Matsuzawa S."/>
            <person name="Miki H."/>
            <person name="Mignone F."/>
            <person name="Miyake S."/>
            <person name="Morris K."/>
            <person name="Mottagui-Tabar S."/>
            <person name="Mulder N."/>
            <person name="Nakano N."/>
            <person name="Nakauchi H."/>
            <person name="Ng P."/>
            <person name="Nilsson R."/>
            <person name="Nishiguchi S."/>
            <person name="Nishikawa S."/>
            <person name="Nori F."/>
            <person name="Ohara O."/>
            <person name="Okazaki Y."/>
            <person name="Orlando V."/>
            <person name="Pang K.C."/>
            <person name="Pavan W.J."/>
            <person name="Pavesi G."/>
            <person name="Pesole G."/>
            <person name="Petrovsky N."/>
            <person name="Piazza S."/>
            <person name="Reed J."/>
            <person name="Reid J.F."/>
            <person name="Ring B.Z."/>
            <person name="Ringwald M."/>
            <person name="Rost B."/>
            <person name="Ruan Y."/>
            <person name="Salzberg S.L."/>
            <person name="Sandelin A."/>
            <person name="Schneider C."/>
            <person name="Schoenbach C."/>
            <person name="Sekiguchi K."/>
            <person name="Semple C.A."/>
            <person name="Seno S."/>
            <person name="Sessa L."/>
            <person name="Sheng Y."/>
            <person name="Shibata Y."/>
            <person name="Shimada H."/>
            <person name="Shimada K."/>
            <person name="Silva D."/>
            <person name="Sinclair B."/>
            <person name="Sperling S."/>
            <person name="Stupka E."/>
            <person name="Sugiura K."/>
            <person name="Sultana R."/>
            <person name="Takenaka Y."/>
            <person name="Taki K."/>
            <person name="Tammoja K."/>
            <person name="Tan S.L."/>
            <person name="Tang S."/>
            <person name="Taylor M.S."/>
            <person name="Tegner J."/>
            <person name="Teichmann S.A."/>
            <person name="Ueda H.R."/>
            <person name="van Nimwegen E."/>
            <person name="Verardo R."/>
            <person name="Wei C.L."/>
            <person name="Yagi K."/>
            <person name="Yamanishi H."/>
            <person name="Zabarovsky E."/>
            <person name="Zhu S."/>
            <person name="Zimmer A."/>
            <person name="Hide W."/>
            <person name="Bult C."/>
            <person name="Grimmond S.M."/>
            <person name="Teasdale R.D."/>
            <person name="Liu E.T."/>
            <person name="Brusic V."/>
            <person name="Quackenbush J."/>
            <person name="Wahlestedt C."/>
            <person name="Mattick J.S."/>
            <person name="Hume D.A."/>
            <person name="Kai C."/>
            <person name="Sasaki D."/>
            <person name="Tomaru Y."/>
            <person name="Fukuda S."/>
            <person name="Kanamori-Katayama M."/>
            <person name="Suzuki M."/>
            <person name="Aoki J."/>
            <person name="Arakawa T."/>
            <person name="Iida J."/>
            <person name="Imamura K."/>
            <person name="Itoh M."/>
            <person name="Kato T."/>
            <person name="Kawaji H."/>
            <person name="Kawagashira N."/>
            <person name="Kawashima T."/>
            <person name="Kojima M."/>
            <person name="Kondo S."/>
            <person name="Konno H."/>
            <person name="Nakano K."/>
            <person name="Ninomiya N."/>
            <person name="Nishio T."/>
            <person name="Okada M."/>
            <person name="Plessy C."/>
            <person name="Shibata K."/>
            <person name="Shiraki T."/>
            <person name="Suzuki S."/>
            <person name="Tagami M."/>
            <person name="Waki K."/>
            <person name="Watahiki A."/>
            <person name="Okamura-Oho Y."/>
            <person name="Suzuki H."/>
            <person name="Kawai J."/>
            <person name="Hayashizaki Y."/>
        </authorList>
    </citation>
    <scope>NUCLEOTIDE SEQUENCE [LARGE SCALE MRNA]</scope>
    <source>
        <strain>C57BL/6J</strain>
        <tissue>Liver</tissue>
    </source>
</reference>
<reference key="3">
    <citation type="journal article" date="2007" name="J. Biol. Chem.">
        <title>Topology and membrane association of lecithin: retinol acyltransferase.</title>
        <authorList>
            <person name="Moise A.R."/>
            <person name="Golczak M."/>
            <person name="Imanishi Y."/>
            <person name="Palczewski K."/>
        </authorList>
    </citation>
    <scope>SUBCELLULAR LOCATION</scope>
    <scope>TOPOLOGY</scope>
</reference>
<reference key="4">
    <citation type="journal article" date="2009" name="Liver Int.">
        <title>Lecithin: retinol acyltransferase protein is distributed in both hepatic stellate cells and endothelial cells of normal rodent and human liver.</title>
        <authorList>
            <person name="Nagatsuma K."/>
            <person name="Hayashi Y."/>
            <person name="Hano H."/>
            <person name="Sagara H."/>
            <person name="Murakami K."/>
            <person name="Saito M."/>
            <person name="Masaki T."/>
            <person name="Lu T."/>
            <person name="Tanaka M."/>
            <person name="Enzan H."/>
            <person name="Aizawa Y."/>
            <person name="Tajiri H."/>
            <person name="Matsuura T."/>
        </authorList>
    </citation>
    <scope>TISSUE SPECIFICITY</scope>
</reference>
<reference key="5">
    <citation type="journal article" date="2010" name="Cell">
        <title>A tissue-specific atlas of mouse protein phosphorylation and expression.</title>
        <authorList>
            <person name="Huttlin E.L."/>
            <person name="Jedrychowski M.P."/>
            <person name="Elias J.E."/>
            <person name="Goswami T."/>
            <person name="Rad R."/>
            <person name="Beausoleil S.A."/>
            <person name="Villen J."/>
            <person name="Haas W."/>
            <person name="Sowa M.E."/>
            <person name="Gygi S.P."/>
        </authorList>
    </citation>
    <scope>IDENTIFICATION BY MASS SPECTROMETRY [LARGE SCALE ANALYSIS]</scope>
    <source>
        <tissue>Liver</tissue>
    </source>
</reference>
<reference key="6">
    <citation type="journal article" date="2010" name="J. Biol. Chem.">
        <title>An acyl-covalent enzyme intermediate of lecithin:retinol acyltransferase.</title>
        <authorList>
            <person name="Golczak M."/>
            <person name="Palczewski K."/>
        </authorList>
    </citation>
    <scope>ACTIVE SITE</scope>
    <scope>IDENTIFICATION BY MASS SPECTROMETRY</scope>
    <scope>CATALYTIC ACTIVITY</scope>
</reference>
<reference key="7">
    <citation type="journal article" date="2015" name="Hum. Mol. Genet.">
        <title>Genetic deletion of S-opsin prevents rapid cone degeneration in a mouse model of Leber congenital amaurosis.</title>
        <authorList>
            <person name="Zhang T."/>
            <person name="Enemchukwu N.O."/>
            <person name="Jones A."/>
            <person name="Wang S."/>
            <person name="Dennis E."/>
            <person name="Watt C.B."/>
            <person name="Pugh E.N. Jr."/>
            <person name="Fu Y."/>
        </authorList>
    </citation>
    <scope>FUNCTION</scope>
    <scope>DISRUPTION PHENOTYPE</scope>
</reference>
<reference key="8">
    <citation type="journal article" date="2017" name="Biochemistry">
        <title>Impact of LCA-Associated E14L LRAT Mutation on Protein Stability and Retinoid Homeostasis.</title>
        <authorList>
            <person name="Chelstowska S."/>
            <person name="Widjaja-Adhi M.A.K."/>
            <person name="Silvaroli J.A."/>
            <person name="Golczak M."/>
        </authorList>
    </citation>
    <scope>SUBCELLULAR LOCATION</scope>
    <scope>BIOPHYSICOCHEMICAL PROPERTIES</scope>
    <scope>MUTAGENESIS OF GLU-14</scope>
</reference>
<keyword id="KW-0002">3D-structure</keyword>
<keyword id="KW-0012">Acyltransferase</keyword>
<keyword id="KW-0963">Cytoplasm</keyword>
<keyword id="KW-0256">Endoplasmic reticulum</keyword>
<keyword id="KW-0967">Endosome</keyword>
<keyword id="KW-0443">Lipid metabolism</keyword>
<keyword id="KW-0472">Membrane</keyword>
<keyword id="KW-1185">Reference proteome</keyword>
<keyword id="KW-0716">Sensory transduction</keyword>
<keyword id="KW-0808">Transferase</keyword>
<keyword id="KW-0812">Transmembrane</keyword>
<keyword id="KW-1133">Transmembrane helix</keyword>
<keyword id="KW-0844">Vision</keyword>
<accession>Q9JI60</accession>
<proteinExistence type="evidence at protein level"/>
<comment type="function">
    <text evidence="2 9 10">Transfers the acyl group from the sn-1 position of phosphatidylcholine to all-trans retinol, producing all-trans retinyl esters. Retinyl esters are storage forms of vitamin A (PubMed:28758396). LRAT plays a critical role in vision (By similarity). It provides the all-trans retinyl ester substrates for the isomerohydrolase which processes the esters into 11-cis-retinol in the retinal pigment epithelium; due to a membrane-associated alcohol dehydrogenase, 11 cis-retinol is oxidized and converted into 11-cis-retinaldehyde which is the chromophore for rhodopsin and the cone photopigments (By similarity). Required for the survival of cone photoreceptors and correct rod photoreceptor cell morphology (PubMed:25416279).</text>
</comment>
<comment type="catalytic activity">
    <reaction evidence="12">
        <text>all-trans-retinol--[retinol-binding protein] + a 1,2-diacyl-sn-glycero-3-phosphocholine = apo--[retinol-binding protein] + an all-trans-retinyl ester + a 2-acyl-sn-glycero-3-phosphocholine</text>
        <dbReference type="Rhea" id="RHEA:17469"/>
        <dbReference type="Rhea" id="RHEA-COMP:14426"/>
        <dbReference type="Rhea" id="RHEA-COMP:14428"/>
        <dbReference type="ChEBI" id="CHEBI:17336"/>
        <dbReference type="ChEBI" id="CHEBI:57643"/>
        <dbReference type="ChEBI" id="CHEBI:57875"/>
        <dbReference type="ChEBI" id="CHEBI:63410"/>
        <dbReference type="ChEBI" id="CHEBI:83228"/>
        <dbReference type="EC" id="2.3.1.135"/>
    </reaction>
    <physiologicalReaction direction="left-to-right" evidence="12">
        <dbReference type="Rhea" id="RHEA:17470"/>
    </physiologicalReaction>
</comment>
<comment type="catalytic activity">
    <reaction evidence="8 10">
        <text>1,2-diheptanoyl-sn-glycero-3-phosphocholine + all-trans-retinol--[retinol-binding protein] = all-trans-retinyl heptanoate + 2-heptanoyl-sn-glycero-3-phosphocholine + apo--[retinol-binding protein]</text>
        <dbReference type="Rhea" id="RHEA:55320"/>
        <dbReference type="Rhea" id="RHEA-COMP:14426"/>
        <dbReference type="Rhea" id="RHEA-COMP:14428"/>
        <dbReference type="ChEBI" id="CHEBI:17336"/>
        <dbReference type="ChEBI" id="CHEBI:83228"/>
        <dbReference type="ChEBI" id="CHEBI:138195"/>
        <dbReference type="ChEBI" id="CHEBI:138266"/>
        <dbReference type="ChEBI" id="CHEBI:138724"/>
    </reaction>
    <physiologicalReaction direction="left-to-right" evidence="12 13">
        <dbReference type="Rhea" id="RHEA:55321"/>
    </physiologicalReaction>
</comment>
<comment type="catalytic activity">
    <reaction evidence="8">
        <text>1,2-dioctanoyl-sn-glycero-3-phosphocholine + all-trans-retinol--[retinol-binding protein] = 2-octanoyl-sn-glycero-3-phosphocholine + all-trans-retinyl octanoate + apo--[retinol-binding protein]</text>
        <dbReference type="Rhea" id="RHEA:56240"/>
        <dbReference type="Rhea" id="RHEA-COMP:14426"/>
        <dbReference type="Rhea" id="RHEA-COMP:14428"/>
        <dbReference type="ChEBI" id="CHEBI:17336"/>
        <dbReference type="ChEBI" id="CHEBI:78228"/>
        <dbReference type="ChEBI" id="CHEBI:83228"/>
        <dbReference type="ChEBI" id="CHEBI:140082"/>
        <dbReference type="ChEBI" id="CHEBI:140084"/>
    </reaction>
    <physiologicalReaction direction="left-to-right" evidence="12">
        <dbReference type="Rhea" id="RHEA:56241"/>
    </physiologicalReaction>
</comment>
<comment type="catalytic activity">
    <reaction evidence="8">
        <text>all-trans-retinol--[retinol-binding protein] + 1,2-dihexadecanoyl-sn-glycero-3-phosphocholine = apo--[retinol-binding protein] + all-trans-retinyl hexadecanoate + 2-hexadecanoyl-sn-glycero-3-phosphocholine</text>
        <dbReference type="Rhea" id="RHEA:56244"/>
        <dbReference type="Rhea" id="RHEA-COMP:14426"/>
        <dbReference type="Rhea" id="RHEA-COMP:14428"/>
        <dbReference type="ChEBI" id="CHEBI:17336"/>
        <dbReference type="ChEBI" id="CHEBI:17616"/>
        <dbReference type="ChEBI" id="CHEBI:72999"/>
        <dbReference type="ChEBI" id="CHEBI:76078"/>
        <dbReference type="ChEBI" id="CHEBI:83228"/>
    </reaction>
    <physiologicalReaction direction="left-to-right" evidence="12">
        <dbReference type="Rhea" id="RHEA:56245"/>
    </physiologicalReaction>
</comment>
<comment type="catalytic activity">
    <reaction evidence="8">
        <text>1,2-didodecanoyl-sn-glycero-3-phosphocholine + all-trans-retinol--[retinol-binding protein] = 2-dodecanoyl-sn-glycero-3-phosphocholine + all-trans-retinyl dodecanoate + apo--[retinol-binding protein]</text>
        <dbReference type="Rhea" id="RHEA:56248"/>
        <dbReference type="Rhea" id="RHEA-COMP:14426"/>
        <dbReference type="Rhea" id="RHEA-COMP:14428"/>
        <dbReference type="ChEBI" id="CHEBI:17336"/>
        <dbReference type="ChEBI" id="CHEBI:65211"/>
        <dbReference type="ChEBI" id="CHEBI:83228"/>
        <dbReference type="ChEBI" id="CHEBI:140088"/>
        <dbReference type="ChEBI" id="CHEBI:140089"/>
    </reaction>
    <physiologicalReaction direction="left-to-right" evidence="12">
        <dbReference type="Rhea" id="RHEA:56249"/>
    </physiologicalReaction>
</comment>
<comment type="catalytic activity">
    <reaction evidence="2">
        <text>1,2-dihexadecanoyl-sn-glycero-3-phosphocholine + all-trans-retinol = all-trans-retinyl hexadecanoate + 2-hexadecanoyl-sn-glycero-3-phosphocholine</text>
        <dbReference type="Rhea" id="RHEA:43904"/>
        <dbReference type="ChEBI" id="CHEBI:17336"/>
        <dbReference type="ChEBI" id="CHEBI:17616"/>
        <dbReference type="ChEBI" id="CHEBI:72999"/>
        <dbReference type="ChEBI" id="CHEBI:76078"/>
    </reaction>
    <physiologicalReaction direction="left-to-right" evidence="2">
        <dbReference type="Rhea" id="RHEA:43905"/>
    </physiologicalReaction>
</comment>
<comment type="activity regulation">
    <text evidence="1">Inhibited by all-trans-retinyl alpha-bromoacetate and N-boc-L-biocytinyl-11-aminoundecane chloro-methyl ketone (BACMK).</text>
</comment>
<comment type="biophysicochemical properties">
    <kinetics>
        <KM evidence="10">4.9 uM for all-trans-retinol--[retinol-binding protein]</KM>
    </kinetics>
</comment>
<comment type="pathway">
    <text>Cofactor metabolism; retinol metabolism.</text>
</comment>
<comment type="subcellular location">
    <subcellularLocation>
        <location evidence="6 10">Endoplasmic reticulum membrane</location>
        <topology evidence="6">Single-pass membrane protein</topology>
    </subcellularLocation>
    <subcellularLocation>
        <location evidence="1">Rough endoplasmic reticulum</location>
    </subcellularLocation>
    <subcellularLocation>
        <location evidence="1">Endosome</location>
        <location evidence="1">Multivesicular body</location>
    </subcellularLocation>
    <subcellularLocation>
        <location evidence="1">Cytoplasm</location>
        <location evidence="1">Perinuclear region</location>
    </subcellularLocation>
    <text evidence="1">Present in the rough endoplasmic reticulum and multivesicular body in hepatic stellate cells. Present in the rough endoplasmic reticulum and perinuclear region in endothelial cells (By similarity).</text>
</comment>
<comment type="tissue specificity">
    <text evidence="7">Hepatic stellate cells and endothelial cells (at protein level).</text>
</comment>
<comment type="induction">
    <text evidence="1 5">LRAT activity is up-regulated by dietary vitamin A (By similarity). Under conditions of vitamin A depletion, LRAT expression in the liver is induced by retinoic acid.</text>
</comment>
<comment type="disruption phenotype">
    <text evidence="9">Knockout mice are viable (PubMed:25416279). Knockout mice at one month of age show loss of nearly all cone photoreceptors in the central and ventral retina (PubMed:25416279). Surviving cone cells show severe degeneration, the dorsal retinal also exhibits a significant reduction in cone photoreceptors (PubMed:25416279). At one month of age rod photoreceptors show shorter outer segments (PubMed:25416279). Nearly all cone photoreceptors are lost by six months of age (PubMed:25416279). Remaining cone cells show disrupted structures with the majority showing abnormal cell bodies or lack of an outer segment (PubMed:25416279).</text>
</comment>
<comment type="similarity">
    <text evidence="11">Belongs to the H-rev107 family.</text>
</comment>
<sequence length="231" mass="25820">MKNPMLEAASLLLEKLLLISNFKLFSVSVPGGGTGKNRPYEISSFVRGDVLEVSRTHFIHYGIYLGENRVAHLMPDILLALTNDKERTQKVVSNKRLLLGVICKVASIRVDTVEDFAYGADILVNHLDGTLKKKSLLNEEVARRAEQQLGLTPYSLLWNNCEHFVTYCRYGSRISPQAEKFYDTVKIIIRDQRSSLASAVLGLASIVYTGLASYMTLPAICIPFCLWMMSG</sequence>
<protein>
    <recommendedName>
        <fullName>Lecithin retinol acyltransferase</fullName>
        <ecNumber evidence="12">2.3.1.135</ecNumber>
    </recommendedName>
    <alternativeName>
        <fullName>Phosphatidylcholine--retinol O-acyltransferase</fullName>
    </alternativeName>
    <alternativeName>
        <fullName>Phosphatidylcholine-retinol-O-acyltransferase</fullName>
    </alternativeName>
</protein>
<gene>
    <name type="primary">Lrat</name>
</gene>
<evidence type="ECO:0000250" key="1"/>
<evidence type="ECO:0000250" key="2">
    <source>
        <dbReference type="UniProtKB" id="O95237"/>
    </source>
</evidence>
<evidence type="ECO:0000255" key="3"/>
<evidence type="ECO:0000255" key="4">
    <source>
        <dbReference type="PROSITE-ProRule" id="PRU01283"/>
    </source>
</evidence>
<evidence type="ECO:0000269" key="5">
    <source>
    </source>
</evidence>
<evidence type="ECO:0000269" key="6">
    <source>
    </source>
</evidence>
<evidence type="ECO:0000269" key="7">
    <source>
    </source>
</evidence>
<evidence type="ECO:0000269" key="8">
    <source>
    </source>
</evidence>
<evidence type="ECO:0000269" key="9">
    <source>
    </source>
</evidence>
<evidence type="ECO:0000269" key="10">
    <source>
    </source>
</evidence>
<evidence type="ECO:0000305" key="11"/>
<evidence type="ECO:0000305" key="12">
    <source>
    </source>
</evidence>
<evidence type="ECO:0000305" key="13">
    <source>
    </source>
</evidence>
<evidence type="ECO:0007829" key="14">
    <source>
        <dbReference type="PDB" id="4Q95"/>
    </source>
</evidence>
<organism>
    <name type="scientific">Mus musculus</name>
    <name type="common">Mouse</name>
    <dbReference type="NCBI Taxonomy" id="10090"/>
    <lineage>
        <taxon>Eukaryota</taxon>
        <taxon>Metazoa</taxon>
        <taxon>Chordata</taxon>
        <taxon>Craniata</taxon>
        <taxon>Vertebrata</taxon>
        <taxon>Euteleostomi</taxon>
        <taxon>Mammalia</taxon>
        <taxon>Eutheria</taxon>
        <taxon>Euarchontoglires</taxon>
        <taxon>Glires</taxon>
        <taxon>Rodentia</taxon>
        <taxon>Myomorpha</taxon>
        <taxon>Muroidea</taxon>
        <taxon>Muridae</taxon>
        <taxon>Murinae</taxon>
        <taxon>Mus</taxon>
        <taxon>Mus</taxon>
    </lineage>
</organism>
<dbReference type="EC" id="2.3.1.135" evidence="12"/>
<dbReference type="EMBL" id="AF255061">
    <property type="protein sequence ID" value="AAF97787.1"/>
    <property type="molecule type" value="mRNA"/>
</dbReference>
<dbReference type="EMBL" id="AK004953">
    <property type="protein sequence ID" value="BAB23696.1"/>
    <property type="molecule type" value="mRNA"/>
</dbReference>
<dbReference type="CCDS" id="CCDS17430.1"/>
<dbReference type="RefSeq" id="NP_076113.1">
    <property type="nucleotide sequence ID" value="NM_023624.4"/>
</dbReference>
<dbReference type="PDB" id="4Q95">
    <property type="method" value="X-ray"/>
    <property type="resolution" value="2.20 A"/>
    <property type="chains" value="A/B=76-106"/>
</dbReference>
<dbReference type="PDBsum" id="4Q95"/>
<dbReference type="SMR" id="Q9JI60"/>
<dbReference type="FunCoup" id="Q9JI60">
    <property type="interactions" value="1092"/>
</dbReference>
<dbReference type="STRING" id="10090.ENSMUSP00000029632"/>
<dbReference type="SwissLipids" id="SLP:000001899"/>
<dbReference type="iPTMnet" id="Q9JI60"/>
<dbReference type="PhosphoSitePlus" id="Q9JI60"/>
<dbReference type="PaxDb" id="10090-ENSMUSP00000029632"/>
<dbReference type="ProteomicsDB" id="252503"/>
<dbReference type="Antibodypedia" id="2389">
    <property type="antibodies" value="278 antibodies from 30 providers"/>
</dbReference>
<dbReference type="DNASU" id="79235"/>
<dbReference type="Ensembl" id="ENSMUST00000029632.7">
    <property type="protein sequence ID" value="ENSMUSP00000029632.7"/>
    <property type="gene ID" value="ENSMUSG00000028003.7"/>
</dbReference>
<dbReference type="GeneID" id="79235"/>
<dbReference type="KEGG" id="mmu:79235"/>
<dbReference type="UCSC" id="uc012cqv.1">
    <property type="organism name" value="mouse"/>
</dbReference>
<dbReference type="AGR" id="MGI:1891259"/>
<dbReference type="CTD" id="9227"/>
<dbReference type="MGI" id="MGI:1891259">
    <property type="gene designation" value="Lrat"/>
</dbReference>
<dbReference type="VEuPathDB" id="HostDB:ENSMUSG00000028003"/>
<dbReference type="eggNOG" id="ENOG502QWSA">
    <property type="taxonomic scope" value="Eukaryota"/>
</dbReference>
<dbReference type="GeneTree" id="ENSGT00510000047351"/>
<dbReference type="HOGENOM" id="CLU_105262_0_0_1"/>
<dbReference type="InParanoid" id="Q9JI60"/>
<dbReference type="OMA" id="PFCLWMV"/>
<dbReference type="OrthoDB" id="421951at2759"/>
<dbReference type="PhylomeDB" id="Q9JI60"/>
<dbReference type="TreeFam" id="TF330836"/>
<dbReference type="BRENDA" id="2.3.1.135">
    <property type="organism ID" value="3474"/>
</dbReference>
<dbReference type="Reactome" id="R-MMU-2453902">
    <property type="pathway name" value="The canonical retinoid cycle in rods (twilight vision)"/>
</dbReference>
<dbReference type="Reactome" id="R-MMU-975634">
    <property type="pathway name" value="Retinoid metabolism and transport"/>
</dbReference>
<dbReference type="SABIO-RK" id="Q9JI60"/>
<dbReference type="UniPathway" id="UPA00912"/>
<dbReference type="BioGRID-ORCS" id="79235">
    <property type="hits" value="2 hits in 80 CRISPR screens"/>
</dbReference>
<dbReference type="PRO" id="PR:Q9JI60"/>
<dbReference type="Proteomes" id="UP000000589">
    <property type="component" value="Chromosome 3"/>
</dbReference>
<dbReference type="RNAct" id="Q9JI60">
    <property type="molecule type" value="protein"/>
</dbReference>
<dbReference type="Bgee" id="ENSMUSG00000028003">
    <property type="expression patterns" value="Expressed in pigmented layer of retina and 54 other cell types or tissues"/>
</dbReference>
<dbReference type="ExpressionAtlas" id="Q9JI60">
    <property type="expression patterns" value="baseline and differential"/>
</dbReference>
<dbReference type="GO" id="GO:0005783">
    <property type="term" value="C:endoplasmic reticulum"/>
    <property type="evidence" value="ECO:0000314"/>
    <property type="project" value="UniProtKB"/>
</dbReference>
<dbReference type="GO" id="GO:0005789">
    <property type="term" value="C:endoplasmic reticulum membrane"/>
    <property type="evidence" value="ECO:0007669"/>
    <property type="project" value="UniProtKB-SubCell"/>
</dbReference>
<dbReference type="GO" id="GO:0005771">
    <property type="term" value="C:multivesicular body"/>
    <property type="evidence" value="ECO:0007669"/>
    <property type="project" value="UniProtKB-SubCell"/>
</dbReference>
<dbReference type="GO" id="GO:0048471">
    <property type="term" value="C:perinuclear region of cytoplasm"/>
    <property type="evidence" value="ECO:0007669"/>
    <property type="project" value="UniProtKB-SubCell"/>
</dbReference>
<dbReference type="GO" id="GO:0005791">
    <property type="term" value="C:rough endoplasmic reticulum"/>
    <property type="evidence" value="ECO:0007669"/>
    <property type="project" value="UniProtKB-SubCell"/>
</dbReference>
<dbReference type="GO" id="GO:0008374">
    <property type="term" value="F:O-acyltransferase activity"/>
    <property type="evidence" value="ECO:0000314"/>
    <property type="project" value="MGI"/>
</dbReference>
<dbReference type="GO" id="GO:0016416">
    <property type="term" value="F:O-palmitoyltransferase activity"/>
    <property type="evidence" value="ECO:0000314"/>
    <property type="project" value="MGI"/>
</dbReference>
<dbReference type="GO" id="GO:0047173">
    <property type="term" value="F:phosphatidylcholine-retinol O-acyltransferase activity"/>
    <property type="evidence" value="ECO:0000315"/>
    <property type="project" value="UniProtKB"/>
</dbReference>
<dbReference type="GO" id="GO:0001972">
    <property type="term" value="F:retinoic acid binding"/>
    <property type="evidence" value="ECO:0007669"/>
    <property type="project" value="Ensembl"/>
</dbReference>
<dbReference type="GO" id="GO:0019841">
    <property type="term" value="F:retinol binding"/>
    <property type="evidence" value="ECO:0007669"/>
    <property type="project" value="Ensembl"/>
</dbReference>
<dbReference type="GO" id="GO:0006653">
    <property type="term" value="P:1,2-diacyl-sn-glycero-3-phosphocholine metabolic process"/>
    <property type="evidence" value="ECO:0000304"/>
    <property type="project" value="MGI"/>
</dbReference>
<dbReference type="GO" id="GO:1990830">
    <property type="term" value="P:cellular response to leukemia inhibitory factor"/>
    <property type="evidence" value="ECO:0000270"/>
    <property type="project" value="MGI"/>
</dbReference>
<dbReference type="GO" id="GO:0019915">
    <property type="term" value="P:lipid storage"/>
    <property type="evidence" value="ECO:0000315"/>
    <property type="project" value="MGI"/>
</dbReference>
<dbReference type="GO" id="GO:0032370">
    <property type="term" value="P:positive regulation of lipid transport"/>
    <property type="evidence" value="ECO:0000316"/>
    <property type="project" value="MGI"/>
</dbReference>
<dbReference type="GO" id="GO:0009617">
    <property type="term" value="P:response to bacterium"/>
    <property type="evidence" value="ECO:0000270"/>
    <property type="project" value="MGI"/>
</dbReference>
<dbReference type="GO" id="GO:0032526">
    <property type="term" value="P:response to retinoic acid"/>
    <property type="evidence" value="ECO:0007669"/>
    <property type="project" value="Ensembl"/>
</dbReference>
<dbReference type="GO" id="GO:0033189">
    <property type="term" value="P:response to vitamin A"/>
    <property type="evidence" value="ECO:0007669"/>
    <property type="project" value="Ensembl"/>
</dbReference>
<dbReference type="GO" id="GO:0001523">
    <property type="term" value="P:retinoid metabolic process"/>
    <property type="evidence" value="ECO:0000315"/>
    <property type="project" value="MGI"/>
</dbReference>
<dbReference type="GO" id="GO:0042572">
    <property type="term" value="P:retinol metabolic process"/>
    <property type="evidence" value="ECO:0000315"/>
    <property type="project" value="UniProtKB"/>
</dbReference>
<dbReference type="GO" id="GO:0007601">
    <property type="term" value="P:visual perception"/>
    <property type="evidence" value="ECO:0007669"/>
    <property type="project" value="UniProtKB-KW"/>
</dbReference>
<dbReference type="GO" id="GO:0006776">
    <property type="term" value="P:vitamin A metabolic process"/>
    <property type="evidence" value="ECO:0000314"/>
    <property type="project" value="MGI"/>
</dbReference>
<dbReference type="FunFam" id="3.90.1720.10:FF:000006">
    <property type="entry name" value="Lecithin retinol acyltransferase"/>
    <property type="match status" value="1"/>
</dbReference>
<dbReference type="Gene3D" id="3.90.1720.10">
    <property type="entry name" value="endopeptidase domain like (from Nostoc punctiforme)"/>
    <property type="match status" value="1"/>
</dbReference>
<dbReference type="InterPro" id="IPR042288">
    <property type="entry name" value="LRAT"/>
</dbReference>
<dbReference type="InterPro" id="IPR007053">
    <property type="entry name" value="LRAT_dom"/>
</dbReference>
<dbReference type="PANTHER" id="PTHR46678">
    <property type="entry name" value="LECITHIN RETINOL ACYLTRANSFERASE"/>
    <property type="match status" value="1"/>
</dbReference>
<dbReference type="PANTHER" id="PTHR46678:SF1">
    <property type="entry name" value="LECITHIN RETINOL ACYLTRANSFERASE"/>
    <property type="match status" value="1"/>
</dbReference>
<dbReference type="Pfam" id="PF04970">
    <property type="entry name" value="LRAT"/>
    <property type="match status" value="1"/>
</dbReference>
<dbReference type="PROSITE" id="PS51934">
    <property type="entry name" value="LRAT"/>
    <property type="match status" value="1"/>
</dbReference>